<name>Y3129_MYCTU</name>
<sequence>MVQGRTVLFRTAEGAKLFSAVAKCAVAFEADDHNVAEGWSVIVKVRAQVLTTDAGVREAERAQLLPWTATLKRHCVRVIPWEITGRHFRFGPEPDRSQTFACEASSHNQR</sequence>
<reference key="1">
    <citation type="journal article" date="2010" name="J. Bacteriol.">
        <title>Massive gene duplication event among clinical isolates of the Mycobacterium tuberculosis W/Beijing family.</title>
        <authorList>
            <person name="Domenech P."/>
            <person name="Kolly G.S."/>
            <person name="Leon-Solis L."/>
            <person name="Fallow A."/>
            <person name="Reed M.B."/>
        </authorList>
    </citation>
    <scope>NUCLEOTIDE SEQUENCE [GENOMIC DNA]</scope>
    <source>
        <strain>G4B1.2</strain>
    </source>
</reference>
<reference key="2">
    <citation type="journal article" date="1998" name="Nature">
        <title>Deciphering the biology of Mycobacterium tuberculosis from the complete genome sequence.</title>
        <authorList>
            <person name="Cole S.T."/>
            <person name="Brosch R."/>
            <person name="Parkhill J."/>
            <person name="Garnier T."/>
            <person name="Churcher C.M."/>
            <person name="Harris D.E."/>
            <person name="Gordon S.V."/>
            <person name="Eiglmeier K."/>
            <person name="Gas S."/>
            <person name="Barry C.E. III"/>
            <person name="Tekaia F."/>
            <person name="Badcock K."/>
            <person name="Basham D."/>
            <person name="Brown D."/>
            <person name="Chillingworth T."/>
            <person name="Connor R."/>
            <person name="Davies R.M."/>
            <person name="Devlin K."/>
            <person name="Feltwell T."/>
            <person name="Gentles S."/>
            <person name="Hamlin N."/>
            <person name="Holroyd S."/>
            <person name="Hornsby T."/>
            <person name="Jagels K."/>
            <person name="Krogh A."/>
            <person name="McLean J."/>
            <person name="Moule S."/>
            <person name="Murphy L.D."/>
            <person name="Oliver S."/>
            <person name="Osborne J."/>
            <person name="Quail M.A."/>
            <person name="Rajandream M.A."/>
            <person name="Rogers J."/>
            <person name="Rutter S."/>
            <person name="Seeger K."/>
            <person name="Skelton S."/>
            <person name="Squares S."/>
            <person name="Squares R."/>
            <person name="Sulston J.E."/>
            <person name="Taylor K."/>
            <person name="Whitehead S."/>
            <person name="Barrell B.G."/>
        </authorList>
    </citation>
    <scope>NUCLEOTIDE SEQUENCE [LARGE SCALE GENOMIC DNA]</scope>
    <source>
        <strain>ATCC 25618 / H37Rv</strain>
    </source>
</reference>
<reference key="3">
    <citation type="journal article" date="2001" name="Proc. Natl. Acad. Sci. U.S.A.">
        <title>Regulation of the Mycobacterium tuberculosis hypoxic response gene encoding alpha -crystallin.</title>
        <authorList>
            <person name="Sherman D.R."/>
            <person name="Voskuil M."/>
            <person name="Schnappinger D."/>
            <person name="Liao R."/>
            <person name="Harrell M.I."/>
            <person name="Schoolnik G.K."/>
        </authorList>
    </citation>
    <scope>INDUCTION BY HYPOXIA</scope>
    <source>
        <strain>ATCC 25618 / H37Rv</strain>
    </source>
</reference>
<reference key="4">
    <citation type="journal article" date="2003" name="J. Exp. Med.">
        <title>Inhibition of respiration by nitric oxide induces a Mycobacterium tuberculosis dormancy program.</title>
        <authorList>
            <person name="Voskuil M.I."/>
            <person name="Schnappinger D."/>
            <person name="Visconti K.C."/>
            <person name="Harrell M.I."/>
            <person name="Dolganov G.M."/>
            <person name="Sherman D.R."/>
            <person name="Schoolnik G.K."/>
        </authorList>
    </citation>
    <scope>INDUCTION BY NITRIC OXIDE (NO) AND BY HYPOXIA</scope>
    <scope>DORMANCY REGULON</scope>
    <source>
        <strain>ATCC 25618 / H37Rv</strain>
    </source>
</reference>
<reference key="5">
    <citation type="journal article" date="2008" name="Cell Host Microbe">
        <title>Mycobacterium tuberculosis senses host-derived carbon monoxide during macrophage infection.</title>
        <authorList>
            <person name="Shiloh M.U."/>
            <person name="Manzanillo P."/>
            <person name="Cox J.S."/>
        </authorList>
    </citation>
    <scope>INDUCTION BY CARBON MONOXIDE (CO)</scope>
    <source>
        <strain>ATCC 35801 / TMC 107 / Erdman</strain>
    </source>
</reference>
<organism>
    <name type="scientific">Mycobacterium tuberculosis (strain ATCC 25618 / H37Rv)</name>
    <dbReference type="NCBI Taxonomy" id="83332"/>
    <lineage>
        <taxon>Bacteria</taxon>
        <taxon>Bacillati</taxon>
        <taxon>Actinomycetota</taxon>
        <taxon>Actinomycetes</taxon>
        <taxon>Mycobacteriales</taxon>
        <taxon>Mycobacteriaceae</taxon>
        <taxon>Mycobacterium</taxon>
        <taxon>Mycobacterium tuberculosis complex</taxon>
    </lineage>
</organism>
<protein>
    <recommendedName>
        <fullName>Uncharacterized protein Rv3129</fullName>
    </recommendedName>
</protein>
<comment type="induction">
    <text evidence="1 2 3">A member of the dormancy regulon. Induced in response to reduced oxygen tension (hypoxia), low levels of nitric oxide (NO) and carbon monoxide (CO). It is hoped that this regulon will give insight into the latent, or dormant phase of infection.</text>
</comment>
<accession>P9WL05</accession>
<accession>E0YJK3</accession>
<accession>F2GJ37</accession>
<accession>Q6MX08</accession>
<accession>Q7D628</accession>
<dbReference type="EMBL" id="HM053705">
    <property type="protein sequence ID" value="ADM62322.1"/>
    <property type="molecule type" value="Genomic_DNA"/>
</dbReference>
<dbReference type="EMBL" id="HM053706">
    <property type="protein sequence ID" value="ADM62326.1"/>
    <property type="molecule type" value="Genomic_DNA"/>
</dbReference>
<dbReference type="EMBL" id="AL123456">
    <property type="protein sequence ID" value="CCP45939.1"/>
    <property type="molecule type" value="Genomic_DNA"/>
</dbReference>
<dbReference type="PIR" id="G70922">
    <property type="entry name" value="G70922"/>
</dbReference>
<dbReference type="RefSeq" id="WP_003416360.1">
    <property type="nucleotide sequence ID" value="NZ_NVQJ01000019.1"/>
</dbReference>
<dbReference type="SMR" id="P9WL05"/>
<dbReference type="STRING" id="83332.Rv3129"/>
<dbReference type="PaxDb" id="83332-Rv3129"/>
<dbReference type="KEGG" id="mtv:RVBD_3129"/>
<dbReference type="TubercuList" id="Rv3129"/>
<dbReference type="eggNOG" id="COG3467">
    <property type="taxonomic scope" value="Bacteria"/>
</dbReference>
<dbReference type="InParanoid" id="P9WL05"/>
<dbReference type="PhylomeDB" id="P9WL05"/>
<dbReference type="Proteomes" id="UP000001584">
    <property type="component" value="Chromosome"/>
</dbReference>
<dbReference type="Gene3D" id="2.30.110.10">
    <property type="entry name" value="Electron Transport, Fmn-binding Protein, Chain A"/>
    <property type="match status" value="1"/>
</dbReference>
<dbReference type="InterPro" id="IPR024747">
    <property type="entry name" value="Pyridox_Oxase-rel"/>
</dbReference>
<dbReference type="InterPro" id="IPR012349">
    <property type="entry name" value="Split_barrel_FMN-bd"/>
</dbReference>
<dbReference type="Pfam" id="PF12900">
    <property type="entry name" value="Pyridox_ox_2"/>
    <property type="match status" value="1"/>
</dbReference>
<dbReference type="SUPFAM" id="SSF50475">
    <property type="entry name" value="FMN-binding split barrel"/>
    <property type="match status" value="1"/>
</dbReference>
<proteinExistence type="evidence at transcript level"/>
<evidence type="ECO:0000269" key="1">
    <source>
    </source>
</evidence>
<evidence type="ECO:0000269" key="2">
    <source>
    </source>
</evidence>
<evidence type="ECO:0000269" key="3">
    <source>
    </source>
</evidence>
<gene>
    <name type="ordered locus">Rv3129</name>
</gene>
<feature type="chain" id="PRO_0000392939" description="Uncharacterized protein Rv3129">
    <location>
        <begin position="1"/>
        <end position="110"/>
    </location>
</feature>
<keyword id="KW-1185">Reference proteome</keyword>